<dbReference type="EMBL" id="U15936">
    <property type="protein sequence ID" value="AAA65235.1"/>
    <property type="molecule type" value="mRNA"/>
</dbReference>
<dbReference type="EMBL" id="AJ002236">
    <property type="protein sequence ID" value="CAA05274.1"/>
    <property type="molecule type" value="Genomic_DNA"/>
</dbReference>
<dbReference type="SMR" id="Q40235"/>
<dbReference type="IntAct" id="Q40235">
    <property type="interactions" value="2"/>
</dbReference>
<dbReference type="MINT" id="Q40235"/>
<dbReference type="GlyCosmos" id="Q40235">
    <property type="glycosylation" value="21 sites, No reported glycans"/>
</dbReference>
<dbReference type="KEGG" id="ag:AAA65235"/>
<dbReference type="GO" id="GO:0005886">
    <property type="term" value="C:plasma membrane"/>
    <property type="evidence" value="ECO:0007669"/>
    <property type="project" value="UniProtKB-SubCell"/>
</dbReference>
<dbReference type="GO" id="GO:0050832">
    <property type="term" value="P:defense response to fungus"/>
    <property type="evidence" value="ECO:0000314"/>
    <property type="project" value="UniProtKB"/>
</dbReference>
<dbReference type="GO" id="GO:0002238">
    <property type="term" value="P:response to molecule of fungal origin"/>
    <property type="evidence" value="ECO:0000270"/>
    <property type="project" value="UniProtKB"/>
</dbReference>
<dbReference type="FunFam" id="3.80.10.10:FF:000111">
    <property type="entry name" value="LRR receptor-like serine/threonine-protein kinase ERECTA"/>
    <property type="match status" value="1"/>
</dbReference>
<dbReference type="FunFam" id="3.80.10.10:FF:000095">
    <property type="entry name" value="LRR receptor-like serine/threonine-protein kinase GSO1"/>
    <property type="match status" value="1"/>
</dbReference>
<dbReference type="FunFam" id="3.80.10.10:FF:000713">
    <property type="entry name" value="Receptor-like protein 48"/>
    <property type="match status" value="1"/>
</dbReference>
<dbReference type="FunFam" id="3.80.10.10:FF:001082">
    <property type="entry name" value="Receptor-like protein Cf-9"/>
    <property type="match status" value="1"/>
</dbReference>
<dbReference type="Gene3D" id="3.80.10.10">
    <property type="entry name" value="Ribonuclease Inhibitor"/>
    <property type="match status" value="4"/>
</dbReference>
<dbReference type="InterPro" id="IPR001611">
    <property type="entry name" value="Leu-rich_rpt"/>
</dbReference>
<dbReference type="InterPro" id="IPR003591">
    <property type="entry name" value="Leu-rich_rpt_typical-subtyp"/>
</dbReference>
<dbReference type="InterPro" id="IPR032675">
    <property type="entry name" value="LRR_dom_sf"/>
</dbReference>
<dbReference type="InterPro" id="IPR013210">
    <property type="entry name" value="LRR_N_plant-typ"/>
</dbReference>
<dbReference type="InterPro" id="IPR046956">
    <property type="entry name" value="RLP23-like"/>
</dbReference>
<dbReference type="PANTHER" id="PTHR48061">
    <property type="entry name" value="LEUCINE-RICH REPEAT RECEPTOR PROTEIN KINASE EMS1-LIKE-RELATED"/>
    <property type="match status" value="1"/>
</dbReference>
<dbReference type="PANTHER" id="PTHR48061:SF10">
    <property type="entry name" value="LEUCINE-RICH REPEAT-CONTAINING N-TERMINAL PLANT-TYPE DOMAIN-CONTAINING PROTEIN"/>
    <property type="match status" value="1"/>
</dbReference>
<dbReference type="Pfam" id="PF00560">
    <property type="entry name" value="LRR_1"/>
    <property type="match status" value="6"/>
</dbReference>
<dbReference type="Pfam" id="PF13855">
    <property type="entry name" value="LRR_8"/>
    <property type="match status" value="3"/>
</dbReference>
<dbReference type="Pfam" id="PF08263">
    <property type="entry name" value="LRRNT_2"/>
    <property type="match status" value="2"/>
</dbReference>
<dbReference type="PRINTS" id="PR00019">
    <property type="entry name" value="LEURICHRPT"/>
</dbReference>
<dbReference type="SMART" id="SM00365">
    <property type="entry name" value="LRR_SD22"/>
    <property type="match status" value="5"/>
</dbReference>
<dbReference type="SMART" id="SM00369">
    <property type="entry name" value="LRR_TYP"/>
    <property type="match status" value="7"/>
</dbReference>
<dbReference type="SUPFAM" id="SSF52058">
    <property type="entry name" value="L domain-like"/>
    <property type="match status" value="2"/>
</dbReference>
<dbReference type="SUPFAM" id="SSF52047">
    <property type="entry name" value="RNI-like"/>
    <property type="match status" value="1"/>
</dbReference>
<name>CF9_SOLPI</name>
<sequence length="863" mass="96570">MDCVKLVFLMLYTFLCQLALSSSLPHLCPEDQALSLLQFKNMFTINPNASDYCYDIRTYVDIQSYPRTLSWNKSTSCCSWDGVHCDETTGQVIALDLRCSQLQGKFHSNSSLFQLSNLKRLDLSFNNFTGSLISPKFGEFSNLTHLDLSHSSFTGLIPSEICHLSKLHVLRICDQYGLSLVPYNFELLLKNLTQLRELNLESVNISSTIPSNFSSHLTTLQLSGTELHGILPERVFHLSNLQSLHLSVNPQLTVRFPTTKWNSSASLMTLYVDSVNIADRIPKSFSHLTSLHELYMGRCNLSGPIPKPLWNLTNIVFLHLGDNHLEGPISHFTIFEKLKRLSLVNNNFDGGLEFLSFNTQLERLDLSSNSLTGPIPSNISGLQNLECLYLSSNHLNGSIPSWIFSLPSLVELDLSNNTFSGKIQEFKSKTLSAVTLKQNKLKGRIPNSLLNQKNLQLLLLSHNNISGHISSAICNLKTLILLDLGSNNLEGTIPQCVVERNEYLSHLDLSKNRLSGTINTTFSVGNILRVISLHGNKLTGKVPRSMINCKYLTLLDLGNNMLNDTFPNWLGYLFQLKILSLRSNKLHGPIKSSGNTNLFMGLQILDLSSNGFSGNLPERILGNLQTMKEIDESTGFPEYISDPYDIYYNYLTTISTKGQDYDSVRILDSNMIINLSKNRFEGHIPSIIGDLVGLRTLNLSHNVLEGHIPASFQNLSVLESLDLSSNKISGEIPQQLASLTFLEVLNLSHNHLVGCIPKGKQFDSFGNTSYQGNDGLRGFPLSKLCGGEDQVTTPAELDQEEEEEDSPMISWQGVLVGYGCGLVIGLSVIYIMWSTQYPAWFSRMDLKLEHIITTKMKKHKKRY</sequence>
<evidence type="ECO:0000255" key="1"/>
<evidence type="ECO:0000255" key="2">
    <source>
        <dbReference type="PROSITE-ProRule" id="PRU00498"/>
    </source>
</evidence>
<evidence type="ECO:0000269" key="3">
    <source>
    </source>
</evidence>
<evidence type="ECO:0000269" key="4">
    <source>
    </source>
</evidence>
<evidence type="ECO:0000269" key="5">
    <source>
    </source>
</evidence>
<evidence type="ECO:0000269" key="6">
    <source>
    </source>
</evidence>
<evidence type="ECO:0000269" key="7">
    <source>
    </source>
</evidence>
<evidence type="ECO:0000269" key="8">
    <source>
    </source>
</evidence>
<evidence type="ECO:0000269" key="9">
    <source>
    </source>
</evidence>
<evidence type="ECO:0000269" key="10">
    <source>
    </source>
</evidence>
<evidence type="ECO:0000305" key="11"/>
<evidence type="ECO:0000305" key="12">
    <source>
    </source>
</evidence>
<evidence type="ECO:0000305" key="13">
    <source>
    </source>
</evidence>
<evidence type="ECO:0000305" key="14">
    <source>
    </source>
</evidence>
<evidence type="ECO:0000312" key="15">
    <source>
        <dbReference type="EMBL" id="AAA65235.1"/>
    </source>
</evidence>
<evidence type="ECO:0000312" key="16">
    <source>
        <dbReference type="EMBL" id="CAA05274.1"/>
    </source>
</evidence>
<organism>
    <name type="scientific">Solanum pimpinellifolium</name>
    <name type="common">Currant tomato</name>
    <name type="synonym">Lycopersicon pimpinellifolium</name>
    <dbReference type="NCBI Taxonomy" id="4084"/>
    <lineage>
        <taxon>Eukaryota</taxon>
        <taxon>Viridiplantae</taxon>
        <taxon>Streptophyta</taxon>
        <taxon>Embryophyta</taxon>
        <taxon>Tracheophyta</taxon>
        <taxon>Spermatophyta</taxon>
        <taxon>Magnoliopsida</taxon>
        <taxon>eudicotyledons</taxon>
        <taxon>Gunneridae</taxon>
        <taxon>Pentapetalae</taxon>
        <taxon>asterids</taxon>
        <taxon>lamiids</taxon>
        <taxon>Solanales</taxon>
        <taxon>Solanaceae</taxon>
        <taxon>Solanoideae</taxon>
        <taxon>Solaneae</taxon>
        <taxon>Solanum</taxon>
        <taxon>Solanum subgen. Lycopersicon</taxon>
    </lineage>
</organism>
<keyword id="KW-1003">Cell membrane</keyword>
<keyword id="KW-0325">Glycoprotein</keyword>
<keyword id="KW-0433">Leucine-rich repeat</keyword>
<keyword id="KW-0472">Membrane</keyword>
<keyword id="KW-0611">Plant defense</keyword>
<keyword id="KW-0677">Repeat</keyword>
<keyword id="KW-0732">Signal</keyword>
<keyword id="KW-0812">Transmembrane</keyword>
<keyword id="KW-1133">Transmembrane helix</keyword>
<accession>Q40235</accession>
<proteinExistence type="evidence at protein level"/>
<gene>
    <name evidence="15 16" type="primary">CF-9</name>
</gene>
<comment type="function">
    <text evidence="4 9 10">Involved in plant defense. Confers resistance to the fungal pathogen C.fulvum through recognition of the AVR9 elicitor protein.</text>
</comment>
<comment type="subunit">
    <text evidence="7">Interacts with thioredoxin-like protein CITRX.</text>
</comment>
<comment type="subcellular location">
    <subcellularLocation>
        <location evidence="11">Cell membrane</location>
        <topology evidence="11">Single-pass type I membrane protein</topology>
    </subcellularLocation>
</comment>
<comment type="induction">
    <text evidence="8">Induced by C.fulvum AVR9 elicitor protein in a temperature-sensitive manner. Repressed by sly-miR6022.</text>
</comment>
<comment type="domain">
    <text evidence="3">The extracellular leucine-rich repeats are required for the specificity of the elicitor protein recognition. Important sequence determinants of Cf-9 function are located in LRRs 10 to 18.</text>
</comment>
<comment type="similarity">
    <text evidence="11">Belongs to the RLP family.</text>
</comment>
<comment type="caution">
    <text evidence="12">The article has been retracted, because it has become clear that the thioredoxin that interacts in yeast 2-hybrid with the Cf-9 C-terminus is in fact localized in the chloroplast, rendering a role in Cf-9 signaling unlikely. All the authors agree that this paper should be withdrawn from the scientific literature.</text>
</comment>
<feature type="signal peptide" evidence="1">
    <location>
        <begin position="1"/>
        <end position="21"/>
    </location>
</feature>
<feature type="chain" id="PRO_5007702783" description="Receptor-like protein Cf-9">
    <location>
        <begin position="22"/>
        <end position="863"/>
    </location>
</feature>
<feature type="topological domain" description="Extracellular" evidence="1">
    <location>
        <begin position="22"/>
        <end position="812"/>
    </location>
</feature>
<feature type="transmembrane region" description="Helical" evidence="1">
    <location>
        <begin position="813"/>
        <end position="833"/>
    </location>
</feature>
<feature type="topological domain" description="Cytoplasmic" evidence="1">
    <location>
        <begin position="834"/>
        <end position="863"/>
    </location>
</feature>
<feature type="repeat" description="LRR 1; degenerate" evidence="11">
    <location>
        <begin position="92"/>
        <end position="115"/>
    </location>
</feature>
<feature type="repeat" description="LRR 2" evidence="1">
    <location>
        <begin position="116"/>
        <end position="139"/>
    </location>
</feature>
<feature type="repeat" description="LRR 3" evidence="1">
    <location>
        <begin position="141"/>
        <end position="164"/>
    </location>
</feature>
<feature type="repeat" description="LRR 4; degenerate" evidence="11">
    <location>
        <begin position="165"/>
        <end position="191"/>
    </location>
</feature>
<feature type="repeat" description="LRR 5" evidence="1">
    <location>
        <begin position="192"/>
        <end position="214"/>
    </location>
</feature>
<feature type="repeat" description="LRR 6" evidence="1">
    <location>
        <begin position="215"/>
        <end position="238"/>
    </location>
</feature>
<feature type="repeat" description="LRR 7" evidence="1">
    <location>
        <begin position="241"/>
        <end position="263"/>
    </location>
</feature>
<feature type="repeat" description="LRR 8" evidence="1">
    <location>
        <begin position="265"/>
        <end position="287"/>
    </location>
</feature>
<feature type="repeat" description="LRR 9" evidence="1">
    <location>
        <begin position="288"/>
        <end position="312"/>
    </location>
</feature>
<feature type="repeat" description="LRR 10" evidence="1">
    <location>
        <begin position="314"/>
        <end position="335"/>
    </location>
</feature>
<feature type="repeat" description="LRR 11" evidence="1">
    <location>
        <begin position="336"/>
        <end position="358"/>
    </location>
</feature>
<feature type="repeat" description="LRR 12" evidence="1">
    <location>
        <begin position="359"/>
        <end position="382"/>
    </location>
</feature>
<feature type="repeat" description="LRR 13" evidence="1">
    <location>
        <begin position="383"/>
        <end position="406"/>
    </location>
</feature>
<feature type="repeat" description="LRR 14" evidence="1">
    <location>
        <begin position="408"/>
        <end position="428"/>
    </location>
</feature>
<feature type="repeat" description="LRR 15" evidence="1">
    <location>
        <begin position="429"/>
        <end position="452"/>
    </location>
</feature>
<feature type="repeat" description="LRR 16" evidence="1">
    <location>
        <begin position="454"/>
        <end position="476"/>
    </location>
</feature>
<feature type="repeat" description="LRR 17" evidence="1">
    <location>
        <begin position="477"/>
        <end position="500"/>
    </location>
</feature>
<feature type="repeat" description="LRR 18" evidence="1">
    <location>
        <begin position="502"/>
        <end position="524"/>
    </location>
</feature>
<feature type="repeat" description="LRR 19" evidence="1">
    <location>
        <begin position="525"/>
        <end position="549"/>
    </location>
</feature>
<feature type="repeat" description="LRR 20" evidence="1">
    <location>
        <begin position="551"/>
        <end position="572"/>
    </location>
</feature>
<feature type="repeat" description="LRR 21" evidence="1">
    <location>
        <begin position="573"/>
        <end position="597"/>
    </location>
</feature>
<feature type="repeat" description="LRR 22" evidence="1">
    <location>
        <begin position="599"/>
        <end position="623"/>
    </location>
</feature>
<feature type="repeat" description="LRR 23" evidence="1">
    <location>
        <begin position="667"/>
        <end position="690"/>
    </location>
</feature>
<feature type="repeat" description="LRR 24" evidence="1">
    <location>
        <begin position="691"/>
        <end position="714"/>
    </location>
</feature>
<feature type="repeat" description="LRR 25" evidence="1">
    <location>
        <begin position="715"/>
        <end position="739"/>
    </location>
</feature>
<feature type="repeat" description="LRR 26" evidence="1">
    <location>
        <begin position="741"/>
        <end position="759"/>
    </location>
</feature>
<feature type="region of interest" description="N-cap" evidence="13 14">
    <location>
        <begin position="24"/>
        <end position="91"/>
    </location>
</feature>
<feature type="region of interest" description="C-cap/acidic domain" evidence="13 14">
    <location>
        <begin position="760"/>
        <end position="812"/>
    </location>
</feature>
<feature type="site" description="Not glycosylated" evidence="6">
    <location>
        <position position="674"/>
    </location>
</feature>
<feature type="glycosylation site" description="N-linked (GlcNAc...) asparagine" evidence="2">
    <location>
        <position position="48"/>
    </location>
</feature>
<feature type="glycosylation site" description="N-linked (GlcNAc...) asparagine" evidence="2">
    <location>
        <position position="72"/>
    </location>
</feature>
<feature type="glycosylation site" description="N-linked (GlcNAc...) asparagine" evidence="2">
    <location>
        <position position="109"/>
    </location>
</feature>
<feature type="glycosylation site" description="N-linked (GlcNAc...) asparagine" evidence="2">
    <location>
        <position position="127"/>
    </location>
</feature>
<feature type="glycosylation site" description="N-linked (GlcNAc...) asparagine" evidence="2">
    <location>
        <position position="142"/>
    </location>
</feature>
<feature type="glycosylation site" description="N-linked (GlcNAc...) asparagine" evidence="2">
    <location>
        <position position="191"/>
    </location>
</feature>
<feature type="glycosylation site" description="N-linked (GlcNAc...) asparagine" evidence="2">
    <location>
        <position position="204"/>
    </location>
</feature>
<feature type="glycosylation site" description="N-linked (GlcNAc...) asparagine" evidence="2">
    <location>
        <position position="212"/>
    </location>
</feature>
<feature type="glycosylation site" description="N-linked (GlcNAc...) asparagine" evidence="2">
    <location>
        <position position="262"/>
    </location>
</feature>
<feature type="glycosylation site" description="N-linked (GlcNAc...) asparagine" evidence="2">
    <location>
        <position position="300"/>
    </location>
</feature>
<feature type="glycosylation site" description="N-linked (GlcNAc...) asparagine" evidence="2">
    <location>
        <position position="311"/>
    </location>
</feature>
<feature type="glycosylation site" description="N-linked (GlcNAc...) asparagine" evidence="2">
    <location>
        <position position="378"/>
    </location>
</feature>
<feature type="glycosylation site" description="N-linked (GlcNAc...) asparagine" evidence="2">
    <location>
        <position position="396"/>
    </location>
</feature>
<feature type="glycosylation site" description="N-linked (GlcNAc...) asparagine" evidence="2">
    <location>
        <position position="416"/>
    </location>
</feature>
<feature type="glycosylation site" description="N-linked (GlcNAc...) asparagine" evidence="2">
    <location>
        <position position="464"/>
    </location>
</feature>
<feature type="glycosylation site" description="N-linked (GlcNAc...) asparagine" evidence="2">
    <location>
        <position position="519"/>
    </location>
</feature>
<feature type="glycosylation site" description="N-linked (GlcNAc...) asparagine" evidence="2">
    <location>
        <position position="563"/>
    </location>
</feature>
<feature type="glycosylation site" description="N-linked (GlcNAc...) asparagine" evidence="2">
    <location>
        <position position="698"/>
    </location>
</feature>
<feature type="glycosylation site" description="N-linked (GlcNAc...) asparagine" evidence="2">
    <location>
        <position position="714"/>
    </location>
</feature>
<feature type="glycosylation site" description="N-linked (GlcNAc...) asparagine" evidence="2">
    <location>
        <position position="746"/>
    </location>
</feature>
<feature type="glycosylation site" description="N-linked (GlcNAc...) asparagine" evidence="2">
    <location>
        <position position="767"/>
    </location>
</feature>
<feature type="mutagenesis site" description="Abolishes resistance to C.fulvum." evidence="6">
    <original>W</original>
    <variation>A</variation>
    <location>
        <position position="71"/>
    </location>
</feature>
<feature type="mutagenesis site" description="Severely reduces resistance to C.fulvum." evidence="6">
    <original>C</original>
    <variation>A</variation>
    <location>
        <position position="78"/>
    </location>
</feature>
<feature type="mutagenesis site" description="Abolishes resistance to C.fulvum." evidence="6">
    <original>W</original>
    <variation>A</variation>
    <variation>T</variation>
    <location>
        <position position="80"/>
    </location>
</feature>
<feature type="mutagenesis site" description="Severely reduces resistance to C.fulvum." evidence="6">
    <original>C</original>
    <variation>A</variation>
    <location>
        <position position="85"/>
    </location>
</feature>
<feature type="mutagenesis site" description="Abolishes resistance to C.fulvum." evidence="6">
    <original>N</original>
    <variation>D</variation>
    <location>
        <position position="191"/>
    </location>
</feature>
<feature type="mutagenesis site" description="Abolishes resistance to C.fulvum." evidence="6">
    <original>T</original>
    <variation>A</variation>
    <location>
        <position position="193"/>
    </location>
</feature>
<feature type="mutagenesis site" description="Abolishes resistance to C.fulvum." evidence="6">
    <original>N</original>
    <variation>D</variation>
    <location>
        <position position="262"/>
    </location>
</feature>
<feature type="mutagenesis site" description="Abolishes resistance to C.fulvum." evidence="6">
    <original>N</original>
    <variation>D</variation>
    <location>
        <position position="311"/>
    </location>
</feature>
<feature type="mutagenesis site" description="Abolishes resistance to C.fulvum." evidence="6">
    <original>T</original>
    <variation>A</variation>
    <location>
        <position position="313"/>
    </location>
</feature>
<feature type="mutagenesis site" description="Abolishes resistance to C.fulvum." evidence="5 6">
    <original>D</original>
    <variation>N</variation>
    <location>
        <position position="365"/>
    </location>
</feature>
<feature type="mutagenesis site" description="Abolishes resistance to C.fulvum." evidence="6">
    <original>S</original>
    <variation>A</variation>
    <location>
        <position position="380"/>
    </location>
</feature>
<feature type="mutagenesis site" description="Abolishes resistance to C.fulvum." evidence="6">
    <original>N</original>
    <variation>D</variation>
    <location>
        <position position="396"/>
    </location>
</feature>
<feature type="mutagenesis site" description="Abolishes resistance to C.fulvum." evidence="5">
    <original>L</original>
    <variation>F</variation>
    <location>
        <position position="457"/>
    </location>
</feature>
<feature type="mutagenesis site" description="Abolishes resistance to C.fulvum." evidence="5 6">
    <original>D</original>
    <variation>N</variation>
    <location>
        <position position="508"/>
    </location>
</feature>
<feature type="mutagenesis site" description="Abolishes resistance to C.fulvum." evidence="5 6">
    <original>S</original>
    <variation>L</variation>
    <location>
        <position position="676"/>
    </location>
</feature>
<feature type="mutagenesis site" description="Abolishes resistance to C.fulvum." evidence="6">
    <original>D</original>
    <variation>N</variation>
    <location>
        <position position="722"/>
    </location>
</feature>
<feature type="mutagenesis site" description="Abolishes resistance to C.fulvum." evidence="5">
    <original>G</original>
    <variation>R</variation>
    <location>
        <position position="825"/>
    </location>
</feature>
<feature type="mutagenesis site" description="Severely reduces resistance to C.fulvum." evidence="5">
    <original>T</original>
    <variation>D</variation>
    <location>
        <position position="835"/>
    </location>
</feature>
<feature type="mutagenesis site" description="Reduces resistance to C.fulvum." evidence="5">
    <original>Q</original>
    <variation>A</variation>
    <location>
        <position position="836"/>
    </location>
</feature>
<feature type="mutagenesis site" description="Reduces resistance to C.fulvum." evidence="5">
    <original>P</original>
    <variation>A</variation>
    <location>
        <position position="838"/>
    </location>
</feature>
<protein>
    <recommendedName>
        <fullName evidence="11">Receptor-like protein Cf-9</fullName>
    </recommendedName>
</protein>
<reference key="1">
    <citation type="journal article" date="1994" name="Science">
        <title>Isolation of the tomato Cf-9 gene for resistance to Cladosporium fulvum by transposon tagging.</title>
        <authorList>
            <person name="Jones D.A."/>
            <person name="Thomas C.M."/>
            <person name="Hammond-Kosack K.E."/>
            <person name="Balint-Kurti P.J."/>
            <person name="Jones J.D."/>
        </authorList>
    </citation>
    <scope>NUCLEOTIDE SEQUENCE [MRNA]</scope>
    <scope>FUNCTION</scope>
    <source>
        <strain>cv. Cf9</strain>
    </source>
</reference>
<reference key="2">
    <citation type="journal article" date="1997" name="Cell">
        <title>Novel disease resistance specificities result from sequence exchange between tandemly repeated genes at the Cf-4/9 locus of tomato.</title>
        <authorList>
            <person name="Parniske M."/>
            <person name="Hammond-Kosack K.E."/>
            <person name="Golstein C."/>
            <person name="Thomas C.M."/>
            <person name="Jones D.A."/>
            <person name="Harrison K."/>
            <person name="Wulff B.B."/>
            <person name="Jones J.D."/>
        </authorList>
    </citation>
    <scope>NUCLEOTIDE SEQUENCE [GENOMIC DNA]</scope>
    <scope>FUNCTION</scope>
    <source>
        <strain>cv. Cf9</strain>
    </source>
</reference>
<reference key="3">
    <citation type="journal article" date="2001" name="Plant Cell">
        <title>Domain swapping and gene shuffling identify sequences required for induction of an Avr-dependent hypersensitive response by the tomato Cf-4 and Cf-9 proteins.</title>
        <authorList>
            <person name="Wulff B.B."/>
            <person name="Thomas C.M."/>
            <person name="Smoker M."/>
            <person name="Grant M."/>
            <person name="Jones J.D."/>
        </authorList>
    </citation>
    <scope>DOMAIN</scope>
</reference>
<reference key="4">
    <citation type="journal article" date="2001" name="Proc. Natl. Acad. Sci. U.S.A.">
        <title>Intragenic recombination generated two distinct Cf genes that mediate AVR9 recognition in the natural population of Lycopersicon pimpinellifolium.</title>
        <authorList>
            <person name="Van Der Hoorn R.A.L."/>
            <person name="Kruijt M."/>
            <person name="Roth R."/>
            <person name="Brandwagt B.F."/>
            <person name="Joosten M.H.A.J."/>
            <person name="De Wit P.J.G.M."/>
        </authorList>
    </citation>
    <scope>FUNCTION</scope>
</reference>
<reference key="5">
    <citation type="journal article" date="2004" name="EMBO J.">
        <title>CITRX thioredoxin interacts with the tomato Cf-9 resistance protein and negatively regulates defence.</title>
        <authorList>
            <person name="Rivas S."/>
            <person name="Rougon-Cardoso A."/>
            <person name="Smoker M."/>
            <person name="Schauser L."/>
            <person name="Yoshioka H."/>
            <person name="Jones J.D."/>
        </authorList>
    </citation>
    <scope>RETRACTED PAPER</scope>
</reference>
<reference key="6">
    <citation type="journal article" date="2019" name="EMBO J.">
        <authorList>
            <person name="Rivas S."/>
            <person name="Rougon-Cardoso A."/>
            <person name="Smoker M."/>
            <person name="Schauser L."/>
            <person name="Yoshioka H."/>
            <person name="Jones J.D."/>
        </authorList>
    </citation>
    <scope>RETRACTION NOTICE OF PUBMED:15131698</scope>
</reference>
<reference key="7">
    <citation type="journal article" date="2004" name="Genetics">
        <title>Genetic variation at the tomato Cf-4/Cf-9 locus induced by EMS mutagenesis and intralocus recombination.</title>
        <authorList>
            <person name="Wulff B.B."/>
            <person name="Thomas C.M."/>
            <person name="Parniske M."/>
            <person name="Jones J.D."/>
        </authorList>
    </citation>
    <scope>MUTAGENESIS OF ASP-365; LEU-457; ASP-508; SER-676 AND GLY-825</scope>
</reference>
<reference key="8">
    <citation type="journal article" date="2005" name="Plant Cell">
        <title>Structure-function analysis of cf-9, a receptor-like protein with extracytoplasmic leucine-rich repeats.</title>
        <authorList>
            <person name="van der Hoorn R.A."/>
            <person name="Wulff B.B."/>
            <person name="Rivas S."/>
            <person name="Durrant M.C."/>
            <person name="van der Ploeg A."/>
            <person name="de Wit P.J."/>
            <person name="Jones J.D."/>
        </authorList>
    </citation>
    <scope>MUTAGENESIS OF TRP-71; CYS-78; TRP-80; CYS-85; ASN-191; THR-193; ASN-262; ASN-311; THR-313; ASP-365; SER-380; ASN-396; ASP-508; SER-676 AND ASP-722</scope>
    <scope>IDENTIFICATION BY MASS SPECTROMETRY</scope>
    <scope>LACK OF GLYCOSYLATION AT ASN-674</scope>
</reference>
<reference key="9">
    <citation type="journal article" date="2016" name="Biochem. Biophys. Res. Commun.">
        <title>Transcriptional and posttranscriptional regulation of the tomato leaf mould disease resistance gene Cf-9.</title>
        <authorList>
            <person name="Li W."/>
            <person name="Xu Y.P."/>
            <person name="Cai X.Z."/>
        </authorList>
    </citation>
    <scope>INDUCTION BY AVR9</scope>
    <scope>REGULATION BY SLY-MIR6022</scope>
</reference>
<reference key="10">
    <citation type="journal article" date="2016" name="Mol. Plant Pathol.">
        <title>A mutational analysis of the cytosolic domain of the tomato Cf-9 disease-resistance protein shows that membrane-proximal residues are important for Avr9-dependent necrosis.</title>
        <authorList>
            <person name="Chakrabarti A."/>
            <person name="Velusamy T."/>
            <person name="Tee C.Y."/>
            <person name="Jones D.A."/>
        </authorList>
    </citation>
    <scope>MUTAGENESIS OF THR-835; GLN-836 AND PRO-838</scope>
    <scope>INTERACTION WITH CITRX</scope>
</reference>